<reference key="1">
    <citation type="submission" date="2008-02" db="EMBL/GenBank/DDBJ databases">
        <title>Complete sequence of Yersinia pseudotuberculosis YPIII.</title>
        <authorList>
            <consortium name="US DOE Joint Genome Institute"/>
            <person name="Copeland A."/>
            <person name="Lucas S."/>
            <person name="Lapidus A."/>
            <person name="Glavina del Rio T."/>
            <person name="Dalin E."/>
            <person name="Tice H."/>
            <person name="Bruce D."/>
            <person name="Goodwin L."/>
            <person name="Pitluck S."/>
            <person name="Munk A.C."/>
            <person name="Brettin T."/>
            <person name="Detter J.C."/>
            <person name="Han C."/>
            <person name="Tapia R."/>
            <person name="Schmutz J."/>
            <person name="Larimer F."/>
            <person name="Land M."/>
            <person name="Hauser L."/>
            <person name="Challacombe J.F."/>
            <person name="Green L."/>
            <person name="Lindler L.E."/>
            <person name="Nikolich M.P."/>
            <person name="Richardson P."/>
        </authorList>
    </citation>
    <scope>NUCLEOTIDE SEQUENCE [LARGE SCALE GENOMIC DNA]</scope>
    <source>
        <strain>YPIII</strain>
    </source>
</reference>
<dbReference type="EC" id="3.1.3.77" evidence="1"/>
<dbReference type="EMBL" id="CP000950">
    <property type="protein sequence ID" value="ACA69589.1"/>
    <property type="molecule type" value="Genomic_DNA"/>
</dbReference>
<dbReference type="RefSeq" id="WP_011906392.1">
    <property type="nucleotide sequence ID" value="NZ_CP009792.1"/>
</dbReference>
<dbReference type="SMR" id="B1JIK5"/>
<dbReference type="KEGG" id="ypy:YPK_3320"/>
<dbReference type="PATRIC" id="fig|502800.11.peg.4055"/>
<dbReference type="UniPathway" id="UPA00904">
    <property type="reaction ID" value="UER00876"/>
</dbReference>
<dbReference type="UniPathway" id="UPA00904">
    <property type="reaction ID" value="UER00877"/>
</dbReference>
<dbReference type="GO" id="GO:0043715">
    <property type="term" value="F:2,3-diketo-5-methylthiopentyl-1-phosphate enolase activity"/>
    <property type="evidence" value="ECO:0007669"/>
    <property type="project" value="UniProtKB-UniRule"/>
</dbReference>
<dbReference type="GO" id="GO:0043716">
    <property type="term" value="F:2-hydroxy-3-keto-5-methylthiopentenyl-1-phosphate phosphatase activity"/>
    <property type="evidence" value="ECO:0007669"/>
    <property type="project" value="UniProtKB-UniRule"/>
</dbReference>
<dbReference type="GO" id="GO:0043874">
    <property type="term" value="F:acireductone synthase activity"/>
    <property type="evidence" value="ECO:0007669"/>
    <property type="project" value="UniProtKB-EC"/>
</dbReference>
<dbReference type="GO" id="GO:0000287">
    <property type="term" value="F:magnesium ion binding"/>
    <property type="evidence" value="ECO:0007669"/>
    <property type="project" value="UniProtKB-UniRule"/>
</dbReference>
<dbReference type="GO" id="GO:0019509">
    <property type="term" value="P:L-methionine salvage from methylthioadenosine"/>
    <property type="evidence" value="ECO:0007669"/>
    <property type="project" value="UniProtKB-UniRule"/>
</dbReference>
<dbReference type="CDD" id="cd01629">
    <property type="entry name" value="HAD_EP"/>
    <property type="match status" value="1"/>
</dbReference>
<dbReference type="Gene3D" id="1.10.720.60">
    <property type="match status" value="1"/>
</dbReference>
<dbReference type="Gene3D" id="3.40.50.1000">
    <property type="entry name" value="HAD superfamily/HAD-like"/>
    <property type="match status" value="1"/>
</dbReference>
<dbReference type="HAMAP" id="MF_01681">
    <property type="entry name" value="Salvage_MtnC"/>
    <property type="match status" value="1"/>
</dbReference>
<dbReference type="InterPro" id="IPR023943">
    <property type="entry name" value="Enolase-ppase_E1"/>
</dbReference>
<dbReference type="InterPro" id="IPR036412">
    <property type="entry name" value="HAD-like_sf"/>
</dbReference>
<dbReference type="InterPro" id="IPR006439">
    <property type="entry name" value="HAD-SF_hydro_IA"/>
</dbReference>
<dbReference type="InterPro" id="IPR023214">
    <property type="entry name" value="HAD_sf"/>
</dbReference>
<dbReference type="NCBIfam" id="TIGR01691">
    <property type="entry name" value="enolase-ppase"/>
    <property type="match status" value="1"/>
</dbReference>
<dbReference type="NCBIfam" id="TIGR01549">
    <property type="entry name" value="HAD-SF-IA-v1"/>
    <property type="match status" value="1"/>
</dbReference>
<dbReference type="PANTHER" id="PTHR20371">
    <property type="entry name" value="ENOLASE-PHOSPHATASE E1"/>
    <property type="match status" value="1"/>
</dbReference>
<dbReference type="PANTHER" id="PTHR20371:SF1">
    <property type="entry name" value="ENOLASE-PHOSPHATASE E1"/>
    <property type="match status" value="1"/>
</dbReference>
<dbReference type="Pfam" id="PF00702">
    <property type="entry name" value="Hydrolase"/>
    <property type="match status" value="1"/>
</dbReference>
<dbReference type="PRINTS" id="PR00413">
    <property type="entry name" value="HADHALOGNASE"/>
</dbReference>
<dbReference type="SFLD" id="SFLDG01129">
    <property type="entry name" value="C1.5:_HAD__Beta-PGM__Phosphata"/>
    <property type="match status" value="1"/>
</dbReference>
<dbReference type="SFLD" id="SFLDF00044">
    <property type="entry name" value="enolase-phosphatase"/>
    <property type="match status" value="1"/>
</dbReference>
<dbReference type="SUPFAM" id="SSF56784">
    <property type="entry name" value="HAD-like"/>
    <property type="match status" value="1"/>
</dbReference>
<name>MTNC_YERPY</name>
<organism>
    <name type="scientific">Yersinia pseudotuberculosis serotype O:3 (strain YPIII)</name>
    <dbReference type="NCBI Taxonomy" id="502800"/>
    <lineage>
        <taxon>Bacteria</taxon>
        <taxon>Pseudomonadati</taxon>
        <taxon>Pseudomonadota</taxon>
        <taxon>Gammaproteobacteria</taxon>
        <taxon>Enterobacterales</taxon>
        <taxon>Yersiniaceae</taxon>
        <taxon>Yersinia</taxon>
    </lineage>
</organism>
<accession>B1JIK5</accession>
<comment type="function">
    <text evidence="1">Bifunctional enzyme that catalyzes the enolization of 2,3-diketo-5-methylthiopentyl-1-phosphate (DK-MTP-1-P) into the intermediate 2-hydroxy-3-keto-5-methylthiopentenyl-1-phosphate (HK-MTPenyl-1-P), which is then dephosphorylated to form the acireductone 1,2-dihydroxy-3-keto-5-methylthiopentene (DHK-MTPene).</text>
</comment>
<comment type="catalytic activity">
    <reaction evidence="1">
        <text>5-methylsulfanyl-2,3-dioxopentyl phosphate + H2O = 1,2-dihydroxy-5-(methylsulfanyl)pent-1-en-3-one + phosphate</text>
        <dbReference type="Rhea" id="RHEA:21700"/>
        <dbReference type="ChEBI" id="CHEBI:15377"/>
        <dbReference type="ChEBI" id="CHEBI:43474"/>
        <dbReference type="ChEBI" id="CHEBI:49252"/>
        <dbReference type="ChEBI" id="CHEBI:58828"/>
        <dbReference type="EC" id="3.1.3.77"/>
    </reaction>
</comment>
<comment type="cofactor">
    <cofactor evidence="1">
        <name>Mg(2+)</name>
        <dbReference type="ChEBI" id="CHEBI:18420"/>
    </cofactor>
    <text evidence="1">Binds 1 Mg(2+) ion per subunit.</text>
</comment>
<comment type="pathway">
    <text evidence="1">Amino-acid biosynthesis; L-methionine biosynthesis via salvage pathway; L-methionine from S-methyl-5-thio-alpha-D-ribose 1-phosphate: step 3/6.</text>
</comment>
<comment type="pathway">
    <text evidence="1">Amino-acid biosynthesis; L-methionine biosynthesis via salvage pathway; L-methionine from S-methyl-5-thio-alpha-D-ribose 1-phosphate: step 4/6.</text>
</comment>
<comment type="subunit">
    <text evidence="1">Monomer.</text>
</comment>
<comment type="similarity">
    <text evidence="1">Belongs to the HAD-like hydrolase superfamily. MasA/MtnC family.</text>
</comment>
<proteinExistence type="inferred from homology"/>
<gene>
    <name evidence="1" type="primary">mtnC</name>
    <name type="ordered locus">YPK_3320</name>
</gene>
<protein>
    <recommendedName>
        <fullName evidence="1">Enolase-phosphatase E1</fullName>
        <ecNumber evidence="1">3.1.3.77</ecNumber>
    </recommendedName>
    <alternativeName>
        <fullName evidence="1">2,3-diketo-5-methylthio-1-phosphopentane phosphatase</fullName>
    </alternativeName>
</protein>
<evidence type="ECO:0000255" key="1">
    <source>
        <dbReference type="HAMAP-Rule" id="MF_01681"/>
    </source>
</evidence>
<feature type="chain" id="PRO_0000357445" description="Enolase-phosphatase E1">
    <location>
        <begin position="1"/>
        <end position="229"/>
    </location>
</feature>
<keyword id="KW-0028">Amino-acid biosynthesis</keyword>
<keyword id="KW-0378">Hydrolase</keyword>
<keyword id="KW-0460">Magnesium</keyword>
<keyword id="KW-0479">Metal-binding</keyword>
<keyword id="KW-0486">Methionine biosynthesis</keyword>
<sequence length="229" mass="25827">MIQAIVTDIEGTTTDIRFVHQVLFPYARERLTPFLRAHQQDDDIAALLVDLRREIAQPDADIETLITVLHGFMDEDRKSTVLKAIQGIIWRTGYLQADFRGHVYPEVAQQLADWHQQGLKLYVYSSGSVAAQKLLFGYSDAGDLCPLFSGYFDTHVGAKRDVSAYQKIANQLGIAPQALLFLSDIRQELDAAQLAGWHTCQLIRDLPDNDSAHPQVNRFDQIVLSLFTE</sequence>